<feature type="chain" id="PRO_1000090831" description="Cysteine--tRNA ligase">
    <location>
        <begin position="1"/>
        <end position="478"/>
    </location>
</feature>
<feature type="short sequence motif" description="'HIGH' region">
    <location>
        <begin position="29"/>
        <end position="39"/>
    </location>
</feature>
<feature type="short sequence motif" description="'KMSKS' region">
    <location>
        <begin position="264"/>
        <end position="268"/>
    </location>
</feature>
<feature type="binding site" evidence="1">
    <location>
        <position position="27"/>
    </location>
    <ligand>
        <name>Zn(2+)</name>
        <dbReference type="ChEBI" id="CHEBI:29105"/>
    </ligand>
</feature>
<feature type="binding site" evidence="1">
    <location>
        <position position="207"/>
    </location>
    <ligand>
        <name>Zn(2+)</name>
        <dbReference type="ChEBI" id="CHEBI:29105"/>
    </ligand>
</feature>
<feature type="binding site" evidence="1">
    <location>
        <position position="232"/>
    </location>
    <ligand>
        <name>Zn(2+)</name>
        <dbReference type="ChEBI" id="CHEBI:29105"/>
    </ligand>
</feature>
<feature type="binding site" evidence="1">
    <location>
        <position position="236"/>
    </location>
    <ligand>
        <name>Zn(2+)</name>
        <dbReference type="ChEBI" id="CHEBI:29105"/>
    </ligand>
</feature>
<feature type="binding site" evidence="1">
    <location>
        <position position="267"/>
    </location>
    <ligand>
        <name>ATP</name>
        <dbReference type="ChEBI" id="CHEBI:30616"/>
    </ligand>
</feature>
<evidence type="ECO:0000255" key="1">
    <source>
        <dbReference type="HAMAP-Rule" id="MF_00041"/>
    </source>
</evidence>
<organism>
    <name type="scientific">Desulforudis audaxviator (strain MP104C)</name>
    <dbReference type="NCBI Taxonomy" id="477974"/>
    <lineage>
        <taxon>Bacteria</taxon>
        <taxon>Bacillati</taxon>
        <taxon>Bacillota</taxon>
        <taxon>Clostridia</taxon>
        <taxon>Thermoanaerobacterales</taxon>
        <taxon>Candidatus Desulforudaceae</taxon>
        <taxon>Candidatus Desulforudis</taxon>
    </lineage>
</organism>
<reference key="1">
    <citation type="submission" date="2007-10" db="EMBL/GenBank/DDBJ databases">
        <title>Complete sequence of chromosome of Desulforudis audaxviator MP104C.</title>
        <authorList>
            <person name="Copeland A."/>
            <person name="Lucas S."/>
            <person name="Lapidus A."/>
            <person name="Barry K."/>
            <person name="Glavina del Rio T."/>
            <person name="Dalin E."/>
            <person name="Tice H."/>
            <person name="Bruce D."/>
            <person name="Pitluck S."/>
            <person name="Lowry S.R."/>
            <person name="Larimer F."/>
            <person name="Land M.L."/>
            <person name="Hauser L."/>
            <person name="Kyrpides N."/>
            <person name="Ivanova N.N."/>
            <person name="Richardson P."/>
        </authorList>
    </citation>
    <scope>NUCLEOTIDE SEQUENCE [LARGE SCALE GENOMIC DNA]</scope>
    <source>
        <strain>MP104C</strain>
    </source>
</reference>
<sequence>MQIFNTLTGRKETFCPRDPGRVSIYVCGPTTYNFIHLGNARALVVFDTIRRYFLYKGYRVLYIQNFTDVDDKIINRSREEGIDPQTLAAKYVDEYFVDADALNVRRADVHPKVSDHIPEIIALITMIIDRGLAYVAGGDVYFAVRKFGGYGRLSKRSLDDLLAGARVEVGEQKRDPLDFALWKAAKPGEPWWESPWGRGRPGWHIECSAMALKYLGTGFDIHGGGADLIFPHHENEIAQSEGATGEPFARYWIHNGFITIREEKMSKSLGNVFLVRELTRLYPPEALRLFLLSNHYRNPLDYDPEAMEASVRAVNRLKTCLGLLRESLDRPAPDGDGGGGNRLEAVLEVLQGRFEAAMDDDFNTALAQAVMFDLTHEVNTYLHQNDRPSRGALQKALDLFDAFNRVLGIFPEHKGRIVLEAGAVSGDLSQGLLDLLIALRQDARRNKDFATADRIRDGLRALGILLEDTPQGVRWKKT</sequence>
<dbReference type="EC" id="6.1.1.16" evidence="1"/>
<dbReference type="EMBL" id="CP000860">
    <property type="protein sequence ID" value="ACA58752.1"/>
    <property type="molecule type" value="Genomic_DNA"/>
</dbReference>
<dbReference type="RefSeq" id="WP_012301345.1">
    <property type="nucleotide sequence ID" value="NC_010424.1"/>
</dbReference>
<dbReference type="SMR" id="B1I0T1"/>
<dbReference type="STRING" id="477974.Daud_0188"/>
<dbReference type="KEGG" id="dau:Daud_0188"/>
<dbReference type="eggNOG" id="COG0215">
    <property type="taxonomic scope" value="Bacteria"/>
</dbReference>
<dbReference type="HOGENOM" id="CLU_013528_0_1_9"/>
<dbReference type="OrthoDB" id="9815130at2"/>
<dbReference type="Proteomes" id="UP000008544">
    <property type="component" value="Chromosome"/>
</dbReference>
<dbReference type="GO" id="GO:0005829">
    <property type="term" value="C:cytosol"/>
    <property type="evidence" value="ECO:0007669"/>
    <property type="project" value="TreeGrafter"/>
</dbReference>
<dbReference type="GO" id="GO:0005524">
    <property type="term" value="F:ATP binding"/>
    <property type="evidence" value="ECO:0007669"/>
    <property type="project" value="UniProtKB-UniRule"/>
</dbReference>
<dbReference type="GO" id="GO:0004817">
    <property type="term" value="F:cysteine-tRNA ligase activity"/>
    <property type="evidence" value="ECO:0007669"/>
    <property type="project" value="UniProtKB-UniRule"/>
</dbReference>
<dbReference type="GO" id="GO:0008270">
    <property type="term" value="F:zinc ion binding"/>
    <property type="evidence" value="ECO:0007669"/>
    <property type="project" value="UniProtKB-UniRule"/>
</dbReference>
<dbReference type="GO" id="GO:0006423">
    <property type="term" value="P:cysteinyl-tRNA aminoacylation"/>
    <property type="evidence" value="ECO:0007669"/>
    <property type="project" value="UniProtKB-UniRule"/>
</dbReference>
<dbReference type="CDD" id="cd00672">
    <property type="entry name" value="CysRS_core"/>
    <property type="match status" value="1"/>
</dbReference>
<dbReference type="FunFam" id="3.40.50.620:FF:000009">
    <property type="entry name" value="Cysteine--tRNA ligase"/>
    <property type="match status" value="1"/>
</dbReference>
<dbReference type="Gene3D" id="1.20.120.1910">
    <property type="entry name" value="Cysteine-tRNA ligase, C-terminal anti-codon recognition domain"/>
    <property type="match status" value="1"/>
</dbReference>
<dbReference type="Gene3D" id="3.40.50.620">
    <property type="entry name" value="HUPs"/>
    <property type="match status" value="1"/>
</dbReference>
<dbReference type="HAMAP" id="MF_00041">
    <property type="entry name" value="Cys_tRNA_synth"/>
    <property type="match status" value="1"/>
</dbReference>
<dbReference type="InterPro" id="IPR015803">
    <property type="entry name" value="Cys-tRNA-ligase"/>
</dbReference>
<dbReference type="InterPro" id="IPR015273">
    <property type="entry name" value="Cys-tRNA-synt_Ia_DALR"/>
</dbReference>
<dbReference type="InterPro" id="IPR024909">
    <property type="entry name" value="Cys-tRNA/MSH_ligase"/>
</dbReference>
<dbReference type="InterPro" id="IPR056411">
    <property type="entry name" value="CysS_C"/>
</dbReference>
<dbReference type="InterPro" id="IPR014729">
    <property type="entry name" value="Rossmann-like_a/b/a_fold"/>
</dbReference>
<dbReference type="InterPro" id="IPR032678">
    <property type="entry name" value="tRNA-synt_1_cat_dom"/>
</dbReference>
<dbReference type="InterPro" id="IPR009080">
    <property type="entry name" value="tRNAsynth_Ia_anticodon-bd"/>
</dbReference>
<dbReference type="NCBIfam" id="TIGR00435">
    <property type="entry name" value="cysS"/>
    <property type="match status" value="1"/>
</dbReference>
<dbReference type="PANTHER" id="PTHR10890:SF3">
    <property type="entry name" value="CYSTEINE--TRNA LIGASE, CYTOPLASMIC"/>
    <property type="match status" value="1"/>
</dbReference>
<dbReference type="PANTHER" id="PTHR10890">
    <property type="entry name" value="CYSTEINYL-TRNA SYNTHETASE"/>
    <property type="match status" value="1"/>
</dbReference>
<dbReference type="Pfam" id="PF23493">
    <property type="entry name" value="CysS_C"/>
    <property type="match status" value="1"/>
</dbReference>
<dbReference type="Pfam" id="PF09190">
    <property type="entry name" value="DALR_2"/>
    <property type="match status" value="1"/>
</dbReference>
<dbReference type="Pfam" id="PF01406">
    <property type="entry name" value="tRNA-synt_1e"/>
    <property type="match status" value="1"/>
</dbReference>
<dbReference type="PRINTS" id="PR00983">
    <property type="entry name" value="TRNASYNTHCYS"/>
</dbReference>
<dbReference type="SMART" id="SM00840">
    <property type="entry name" value="DALR_2"/>
    <property type="match status" value="1"/>
</dbReference>
<dbReference type="SUPFAM" id="SSF47323">
    <property type="entry name" value="Anticodon-binding domain of a subclass of class I aminoacyl-tRNA synthetases"/>
    <property type="match status" value="1"/>
</dbReference>
<dbReference type="SUPFAM" id="SSF52374">
    <property type="entry name" value="Nucleotidylyl transferase"/>
    <property type="match status" value="1"/>
</dbReference>
<proteinExistence type="inferred from homology"/>
<name>SYC_DESAP</name>
<comment type="catalytic activity">
    <reaction evidence="1">
        <text>tRNA(Cys) + L-cysteine + ATP = L-cysteinyl-tRNA(Cys) + AMP + diphosphate</text>
        <dbReference type="Rhea" id="RHEA:17773"/>
        <dbReference type="Rhea" id="RHEA-COMP:9661"/>
        <dbReference type="Rhea" id="RHEA-COMP:9679"/>
        <dbReference type="ChEBI" id="CHEBI:30616"/>
        <dbReference type="ChEBI" id="CHEBI:33019"/>
        <dbReference type="ChEBI" id="CHEBI:35235"/>
        <dbReference type="ChEBI" id="CHEBI:78442"/>
        <dbReference type="ChEBI" id="CHEBI:78517"/>
        <dbReference type="ChEBI" id="CHEBI:456215"/>
        <dbReference type="EC" id="6.1.1.16"/>
    </reaction>
</comment>
<comment type="cofactor">
    <cofactor evidence="1">
        <name>Zn(2+)</name>
        <dbReference type="ChEBI" id="CHEBI:29105"/>
    </cofactor>
    <text evidence="1">Binds 1 zinc ion per subunit.</text>
</comment>
<comment type="subunit">
    <text evidence="1">Monomer.</text>
</comment>
<comment type="subcellular location">
    <subcellularLocation>
        <location evidence="1">Cytoplasm</location>
    </subcellularLocation>
</comment>
<comment type="similarity">
    <text evidence="1">Belongs to the class-I aminoacyl-tRNA synthetase family.</text>
</comment>
<protein>
    <recommendedName>
        <fullName evidence="1">Cysteine--tRNA ligase</fullName>
        <ecNumber evidence="1">6.1.1.16</ecNumber>
    </recommendedName>
    <alternativeName>
        <fullName evidence="1">Cysteinyl-tRNA synthetase</fullName>
        <shortName evidence="1">CysRS</shortName>
    </alternativeName>
</protein>
<keyword id="KW-0030">Aminoacyl-tRNA synthetase</keyword>
<keyword id="KW-0067">ATP-binding</keyword>
<keyword id="KW-0963">Cytoplasm</keyword>
<keyword id="KW-0436">Ligase</keyword>
<keyword id="KW-0479">Metal-binding</keyword>
<keyword id="KW-0547">Nucleotide-binding</keyword>
<keyword id="KW-0648">Protein biosynthesis</keyword>
<keyword id="KW-1185">Reference proteome</keyword>
<keyword id="KW-0862">Zinc</keyword>
<gene>
    <name evidence="1" type="primary">cysS</name>
    <name type="ordered locus">Daud_0188</name>
</gene>
<accession>B1I0T1</accession>